<sequence>MQKIVIVANGAPYGSESLFNSLRLAIALREQESNLDLRLFLMSDAVTAGLRGQKPGEGYNIQQMLEILTAQNVPVKLCKTCTDGRGISTLPLIDGVEIGTLVELAQWTLSADKVLTF</sequence>
<organism>
    <name type="scientific">Escherichia coli O157:H7</name>
    <dbReference type="NCBI Taxonomy" id="83334"/>
    <lineage>
        <taxon>Bacteria</taxon>
        <taxon>Pseudomonadati</taxon>
        <taxon>Pseudomonadota</taxon>
        <taxon>Gammaproteobacteria</taxon>
        <taxon>Enterobacterales</taxon>
        <taxon>Enterobacteriaceae</taxon>
        <taxon>Escherichia</taxon>
    </lineage>
</organism>
<gene>
    <name type="primary">ychN</name>
    <name type="ordered locus">Z1994</name>
    <name type="ordered locus">ECs1724</name>
</gene>
<evidence type="ECO:0000250" key="1"/>
<evidence type="ECO:0000305" key="2"/>
<comment type="subunit">
    <text evidence="1">Homohexamer. The hexamer is formed by a dimer of trimers (By similarity).</text>
</comment>
<comment type="similarity">
    <text evidence="2">To M.jannaschii MJ0989.</text>
</comment>
<accession>P0AB53</accession>
<accession>P39164</accession>
<accession>P76021</accession>
<name>YCHN_ECO57</name>
<protein>
    <recommendedName>
        <fullName>Protein YchN</fullName>
    </recommendedName>
</protein>
<keyword id="KW-1185">Reference proteome</keyword>
<feature type="chain" id="PRO_0000168871" description="Protein YchN">
    <location>
        <begin position="1"/>
        <end position="117"/>
    </location>
</feature>
<proteinExistence type="inferred from homology"/>
<reference key="1">
    <citation type="journal article" date="2001" name="Nature">
        <title>Genome sequence of enterohaemorrhagic Escherichia coli O157:H7.</title>
        <authorList>
            <person name="Perna N.T."/>
            <person name="Plunkett G. III"/>
            <person name="Burland V."/>
            <person name="Mau B."/>
            <person name="Glasner J.D."/>
            <person name="Rose D.J."/>
            <person name="Mayhew G.F."/>
            <person name="Evans P.S."/>
            <person name="Gregor J."/>
            <person name="Kirkpatrick H.A."/>
            <person name="Posfai G."/>
            <person name="Hackett J."/>
            <person name="Klink S."/>
            <person name="Boutin A."/>
            <person name="Shao Y."/>
            <person name="Miller L."/>
            <person name="Grotbeck E.J."/>
            <person name="Davis N.W."/>
            <person name="Lim A."/>
            <person name="Dimalanta E.T."/>
            <person name="Potamousis K."/>
            <person name="Apodaca J."/>
            <person name="Anantharaman T.S."/>
            <person name="Lin J."/>
            <person name="Yen G."/>
            <person name="Schwartz D.C."/>
            <person name="Welch R.A."/>
            <person name="Blattner F.R."/>
        </authorList>
    </citation>
    <scope>NUCLEOTIDE SEQUENCE [LARGE SCALE GENOMIC DNA]</scope>
    <source>
        <strain>O157:H7 / EDL933 / ATCC 700927 / EHEC</strain>
    </source>
</reference>
<reference key="2">
    <citation type="journal article" date="2001" name="DNA Res.">
        <title>Complete genome sequence of enterohemorrhagic Escherichia coli O157:H7 and genomic comparison with a laboratory strain K-12.</title>
        <authorList>
            <person name="Hayashi T."/>
            <person name="Makino K."/>
            <person name="Ohnishi M."/>
            <person name="Kurokawa K."/>
            <person name="Ishii K."/>
            <person name="Yokoyama K."/>
            <person name="Han C.-G."/>
            <person name="Ohtsubo E."/>
            <person name="Nakayama K."/>
            <person name="Murata T."/>
            <person name="Tanaka M."/>
            <person name="Tobe T."/>
            <person name="Iida T."/>
            <person name="Takami H."/>
            <person name="Honda T."/>
            <person name="Sasakawa C."/>
            <person name="Ogasawara N."/>
            <person name="Yasunaga T."/>
            <person name="Kuhara S."/>
            <person name="Shiba T."/>
            <person name="Hattori M."/>
            <person name="Shinagawa H."/>
        </authorList>
    </citation>
    <scope>NUCLEOTIDE SEQUENCE [LARGE SCALE GENOMIC DNA]</scope>
    <source>
        <strain>O157:H7 / Sakai / RIMD 0509952 / EHEC</strain>
    </source>
</reference>
<dbReference type="EMBL" id="AE005174">
    <property type="protein sequence ID" value="AAG56079.1"/>
    <property type="molecule type" value="Genomic_DNA"/>
</dbReference>
<dbReference type="EMBL" id="BA000007">
    <property type="protein sequence ID" value="BAB35147.1"/>
    <property type="molecule type" value="Genomic_DNA"/>
</dbReference>
<dbReference type="PIR" id="C85702">
    <property type="entry name" value="C85702"/>
</dbReference>
<dbReference type="PIR" id="D90844">
    <property type="entry name" value="D90844"/>
</dbReference>
<dbReference type="RefSeq" id="NP_309751.1">
    <property type="nucleotide sequence ID" value="NC_002695.1"/>
</dbReference>
<dbReference type="RefSeq" id="WP_001169669.1">
    <property type="nucleotide sequence ID" value="NZ_VOAI01000031.1"/>
</dbReference>
<dbReference type="SMR" id="P0AB53"/>
<dbReference type="STRING" id="155864.Z1994"/>
<dbReference type="GeneID" id="913137"/>
<dbReference type="GeneID" id="93775287"/>
<dbReference type="KEGG" id="ece:Z1994"/>
<dbReference type="KEGG" id="ecs:ECs_1724"/>
<dbReference type="PATRIC" id="fig|386585.9.peg.1824"/>
<dbReference type="eggNOG" id="COG1553">
    <property type="taxonomic scope" value="Bacteria"/>
</dbReference>
<dbReference type="HOGENOM" id="CLU_151801_2_0_6"/>
<dbReference type="OMA" id="GTCMDAR"/>
<dbReference type="Proteomes" id="UP000000558">
    <property type="component" value="Chromosome"/>
</dbReference>
<dbReference type="Proteomes" id="UP000002519">
    <property type="component" value="Chromosome"/>
</dbReference>
<dbReference type="GO" id="GO:0005829">
    <property type="term" value="C:cytosol"/>
    <property type="evidence" value="ECO:0007669"/>
    <property type="project" value="TreeGrafter"/>
</dbReference>
<dbReference type="FunFam" id="3.40.1260.10:FF:000003">
    <property type="entry name" value="DsrE/DsrF-like family protein"/>
    <property type="match status" value="1"/>
</dbReference>
<dbReference type="Gene3D" id="3.40.1260.10">
    <property type="entry name" value="DsrEFH-like"/>
    <property type="match status" value="1"/>
</dbReference>
<dbReference type="InterPro" id="IPR027396">
    <property type="entry name" value="DsrEFH-like"/>
</dbReference>
<dbReference type="InterPro" id="IPR003787">
    <property type="entry name" value="Sulphur_relay_DsrE/F-like"/>
</dbReference>
<dbReference type="PANTHER" id="PTHR34874">
    <property type="entry name" value="PROTEIN YCHN"/>
    <property type="match status" value="1"/>
</dbReference>
<dbReference type="PANTHER" id="PTHR34874:SF1">
    <property type="entry name" value="PROTEIN YCHN"/>
    <property type="match status" value="1"/>
</dbReference>
<dbReference type="Pfam" id="PF02635">
    <property type="entry name" value="DsrE"/>
    <property type="match status" value="1"/>
</dbReference>
<dbReference type="SUPFAM" id="SSF75169">
    <property type="entry name" value="DsrEFH-like"/>
    <property type="match status" value="1"/>
</dbReference>